<sequence>MVQHHQAAANDDHQAIPLLTPYKQAGRPGSKLDLSHRVLLAPMTRCRSYGNVPQPHAALYYTQRATRGGLLITEATGVSATAQGYPETPGVRTREHVEAWKPIVDAVHRKGALFICQLWHVGRVSNNGFQPDGLAPISSTDKAITPDGYGMVYSKPRRLRTDEIPQIVDDFRLAARNAVEAGFDGVEIHGANGYLLEQFMKDSSNDRTDEYGGSLENRCRFAVEVIDAVVGEIGAHSVGIRLSPFLDYMDCVDSDPEALGSYMVEQLNKHEDFLYCHMVEPRMAIVDGRRQIQHGLLPFRKQFNGTFIAAGGYDREEGNKAVADGYADLVAYGRLFLANPDLPKRFELDAPMNNYDRNTFYTQDPVVGYTDYPFLDEHHHDDDDDSNAPSA</sequence>
<dbReference type="EC" id="1.3.1.-"/>
<dbReference type="EMBL" id="AP003525">
    <property type="protein sequence ID" value="BAD35317.1"/>
    <property type="molecule type" value="Genomic_DNA"/>
</dbReference>
<dbReference type="EMBL" id="AP004741">
    <property type="protein sequence ID" value="BAD35825.1"/>
    <property type="molecule type" value="Genomic_DNA"/>
</dbReference>
<dbReference type="EMBL" id="AP008212">
    <property type="protein sequence ID" value="BAF19053.1"/>
    <property type="molecule type" value="Genomic_DNA"/>
</dbReference>
<dbReference type="EMBL" id="AP014962">
    <property type="protein sequence ID" value="BAS96777.1"/>
    <property type="molecule type" value="Genomic_DNA"/>
</dbReference>
<dbReference type="EMBL" id="CM000143">
    <property type="protein sequence ID" value="EAZ36269.1"/>
    <property type="molecule type" value="Genomic_DNA"/>
</dbReference>
<dbReference type="EMBL" id="AK108079">
    <property type="protein sequence ID" value="BAG98273.1"/>
    <property type="molecule type" value="mRNA"/>
</dbReference>
<dbReference type="RefSeq" id="XP_015641952.1">
    <property type="nucleotide sequence ID" value="XM_015786466.1"/>
</dbReference>
<dbReference type="SMR" id="Q69TI2"/>
<dbReference type="FunCoup" id="Q69TI2">
    <property type="interactions" value="160"/>
</dbReference>
<dbReference type="STRING" id="39947.Q69TI2"/>
<dbReference type="PaxDb" id="39947-Q69TI2"/>
<dbReference type="EnsemblPlants" id="Os06t0215500-01">
    <property type="protein sequence ID" value="Os06t0215500-01"/>
    <property type="gene ID" value="Os06g0215500"/>
</dbReference>
<dbReference type="Gramene" id="Os06t0215500-01">
    <property type="protein sequence ID" value="Os06t0215500-01"/>
    <property type="gene ID" value="Os06g0215500"/>
</dbReference>
<dbReference type="KEGG" id="dosa:Os06g0215500"/>
<dbReference type="eggNOG" id="KOG0134">
    <property type="taxonomic scope" value="Eukaryota"/>
</dbReference>
<dbReference type="HOGENOM" id="CLU_012153_0_0_1"/>
<dbReference type="InParanoid" id="Q69TI2"/>
<dbReference type="OMA" id="TGSADNY"/>
<dbReference type="OrthoDB" id="1663137at2759"/>
<dbReference type="Proteomes" id="UP000000763">
    <property type="component" value="Chromosome 6"/>
</dbReference>
<dbReference type="Proteomes" id="UP000007752">
    <property type="component" value="Chromosome 6"/>
</dbReference>
<dbReference type="Proteomes" id="UP000059680">
    <property type="component" value="Chromosome 6"/>
</dbReference>
<dbReference type="GO" id="GO:0010181">
    <property type="term" value="F:FMN binding"/>
    <property type="evidence" value="ECO:0007669"/>
    <property type="project" value="InterPro"/>
</dbReference>
<dbReference type="GO" id="GO:0016491">
    <property type="term" value="F:oxidoreductase activity"/>
    <property type="evidence" value="ECO:0000318"/>
    <property type="project" value="GO_Central"/>
</dbReference>
<dbReference type="GO" id="GO:0009695">
    <property type="term" value="P:jasmonic acid biosynthetic process"/>
    <property type="evidence" value="ECO:0000318"/>
    <property type="project" value="GO_Central"/>
</dbReference>
<dbReference type="GO" id="GO:0031408">
    <property type="term" value="P:oxylipin biosynthetic process"/>
    <property type="evidence" value="ECO:0000318"/>
    <property type="project" value="GO_Central"/>
</dbReference>
<dbReference type="CDD" id="cd02933">
    <property type="entry name" value="OYE_like_FMN"/>
    <property type="match status" value="1"/>
</dbReference>
<dbReference type="FunFam" id="3.20.20.70:FF:000073">
    <property type="entry name" value="12-oxophytodienoate reductase 3"/>
    <property type="match status" value="1"/>
</dbReference>
<dbReference type="Gene3D" id="3.20.20.70">
    <property type="entry name" value="Aldolase class I"/>
    <property type="match status" value="1"/>
</dbReference>
<dbReference type="InterPro" id="IPR013785">
    <property type="entry name" value="Aldolase_TIM"/>
</dbReference>
<dbReference type="InterPro" id="IPR001155">
    <property type="entry name" value="OxRdtase_FMN_N"/>
</dbReference>
<dbReference type="InterPro" id="IPR045247">
    <property type="entry name" value="Oye-like"/>
</dbReference>
<dbReference type="PANTHER" id="PTHR22893:SF44">
    <property type="entry name" value="12-OXOPHYTODIENOATE REDUCTASE 1"/>
    <property type="match status" value="1"/>
</dbReference>
<dbReference type="PANTHER" id="PTHR22893">
    <property type="entry name" value="NADH OXIDOREDUCTASE-RELATED"/>
    <property type="match status" value="1"/>
</dbReference>
<dbReference type="Pfam" id="PF00724">
    <property type="entry name" value="Oxidored_FMN"/>
    <property type="match status" value="1"/>
</dbReference>
<dbReference type="SUPFAM" id="SSF51395">
    <property type="entry name" value="FMN-linked oxidoreductases"/>
    <property type="match status" value="1"/>
</dbReference>
<feature type="chain" id="PRO_0000410712" description="Putative 12-oxophytodienoate reductase 6">
    <location>
        <begin position="1"/>
        <end position="391"/>
    </location>
</feature>
<feature type="region of interest" description="Disordered" evidence="2">
    <location>
        <begin position="372"/>
        <end position="391"/>
    </location>
</feature>
<feature type="compositionally biased region" description="Acidic residues" evidence="2">
    <location>
        <begin position="382"/>
        <end position="391"/>
    </location>
</feature>
<feature type="active site" description="Proton donor" evidence="1">
    <location>
        <position position="194"/>
    </location>
</feature>
<feature type="binding site" evidence="1">
    <location>
        <begin position="42"/>
        <end position="44"/>
    </location>
    <ligand>
        <name>FMN</name>
        <dbReference type="ChEBI" id="CHEBI:58210"/>
    </ligand>
</feature>
<feature type="binding site" evidence="1">
    <location>
        <position position="75"/>
    </location>
    <ligand>
        <name>FMN</name>
        <dbReference type="ChEBI" id="CHEBI:58210"/>
    </ligand>
</feature>
<feature type="binding site" evidence="1">
    <location>
        <position position="117"/>
    </location>
    <ligand>
        <name>FMN</name>
        <dbReference type="ChEBI" id="CHEBI:58210"/>
    </ligand>
</feature>
<feature type="binding site" evidence="1">
    <location>
        <begin position="189"/>
        <end position="192"/>
    </location>
    <ligand>
        <name>substrate</name>
    </ligand>
</feature>
<feature type="binding site" evidence="1">
    <location>
        <position position="241"/>
    </location>
    <ligand>
        <name>FMN</name>
        <dbReference type="ChEBI" id="CHEBI:58210"/>
    </ligand>
</feature>
<feature type="binding site" evidence="1">
    <location>
        <position position="282"/>
    </location>
    <ligand>
        <name>substrate</name>
    </ligand>
</feature>
<feature type="binding site" evidence="1">
    <location>
        <position position="312"/>
    </location>
    <ligand>
        <name>FMN</name>
        <dbReference type="ChEBI" id="CHEBI:58210"/>
    </ligand>
</feature>
<feature type="binding site" evidence="1">
    <location>
        <begin position="333"/>
        <end position="334"/>
    </location>
    <ligand>
        <name>FMN</name>
        <dbReference type="ChEBI" id="CHEBI:58210"/>
    </ligand>
</feature>
<organism>
    <name type="scientific">Oryza sativa subsp. japonica</name>
    <name type="common">Rice</name>
    <dbReference type="NCBI Taxonomy" id="39947"/>
    <lineage>
        <taxon>Eukaryota</taxon>
        <taxon>Viridiplantae</taxon>
        <taxon>Streptophyta</taxon>
        <taxon>Embryophyta</taxon>
        <taxon>Tracheophyta</taxon>
        <taxon>Spermatophyta</taxon>
        <taxon>Magnoliopsida</taxon>
        <taxon>Liliopsida</taxon>
        <taxon>Poales</taxon>
        <taxon>Poaceae</taxon>
        <taxon>BOP clade</taxon>
        <taxon>Oryzoideae</taxon>
        <taxon>Oryzeae</taxon>
        <taxon>Oryzinae</taxon>
        <taxon>Oryza</taxon>
        <taxon>Oryza sativa</taxon>
    </lineage>
</organism>
<accession>Q69TI2</accession>
<accession>A0A0N7KLR8</accession>
<evidence type="ECO:0000250" key="1"/>
<evidence type="ECO:0000256" key="2">
    <source>
        <dbReference type="SAM" id="MobiDB-lite"/>
    </source>
</evidence>
<evidence type="ECO:0000305" key="3"/>
<keyword id="KW-0275">Fatty acid biosynthesis</keyword>
<keyword id="KW-0276">Fatty acid metabolism</keyword>
<keyword id="KW-0285">Flavoprotein</keyword>
<keyword id="KW-0288">FMN</keyword>
<keyword id="KW-0444">Lipid biosynthesis</keyword>
<keyword id="KW-0443">Lipid metabolism</keyword>
<keyword id="KW-0521">NADP</keyword>
<keyword id="KW-0560">Oxidoreductase</keyword>
<keyword id="KW-0925">Oxylipin biosynthesis</keyword>
<keyword id="KW-1185">Reference proteome</keyword>
<gene>
    <name type="primary">OPR6</name>
    <name type="synonym">OPR4</name>
    <name type="ordered locus">Os06g0215500</name>
    <name type="ORF">OsJ_20590</name>
    <name type="ORF">OSJNBb0024N18.3</name>
    <name type="ORF">P0537F07.25</name>
</gene>
<reference key="1">
    <citation type="journal article" date="2005" name="Nature">
        <title>The map-based sequence of the rice genome.</title>
        <authorList>
            <consortium name="International rice genome sequencing project (IRGSP)"/>
        </authorList>
    </citation>
    <scope>NUCLEOTIDE SEQUENCE [LARGE SCALE GENOMIC DNA]</scope>
    <source>
        <strain>cv. Nipponbare</strain>
    </source>
</reference>
<reference key="2">
    <citation type="journal article" date="2008" name="Nucleic Acids Res.">
        <title>The rice annotation project database (RAP-DB): 2008 update.</title>
        <authorList>
            <consortium name="The rice annotation project (RAP)"/>
        </authorList>
    </citation>
    <scope>GENOME REANNOTATION</scope>
    <source>
        <strain>cv. Nipponbare</strain>
    </source>
</reference>
<reference key="3">
    <citation type="journal article" date="2013" name="Rice">
        <title>Improvement of the Oryza sativa Nipponbare reference genome using next generation sequence and optical map data.</title>
        <authorList>
            <person name="Kawahara Y."/>
            <person name="de la Bastide M."/>
            <person name="Hamilton J.P."/>
            <person name="Kanamori H."/>
            <person name="McCombie W.R."/>
            <person name="Ouyang S."/>
            <person name="Schwartz D.C."/>
            <person name="Tanaka T."/>
            <person name="Wu J."/>
            <person name="Zhou S."/>
            <person name="Childs K.L."/>
            <person name="Davidson R.M."/>
            <person name="Lin H."/>
            <person name="Quesada-Ocampo L."/>
            <person name="Vaillancourt B."/>
            <person name="Sakai H."/>
            <person name="Lee S.S."/>
            <person name="Kim J."/>
            <person name="Numa H."/>
            <person name="Itoh T."/>
            <person name="Buell C.R."/>
            <person name="Matsumoto T."/>
        </authorList>
    </citation>
    <scope>GENOME REANNOTATION</scope>
    <source>
        <strain>cv. Nipponbare</strain>
    </source>
</reference>
<reference key="4">
    <citation type="journal article" date="2005" name="PLoS Biol.">
        <title>The genomes of Oryza sativa: a history of duplications.</title>
        <authorList>
            <person name="Yu J."/>
            <person name="Wang J."/>
            <person name="Lin W."/>
            <person name="Li S."/>
            <person name="Li H."/>
            <person name="Zhou J."/>
            <person name="Ni P."/>
            <person name="Dong W."/>
            <person name="Hu S."/>
            <person name="Zeng C."/>
            <person name="Zhang J."/>
            <person name="Zhang Y."/>
            <person name="Li R."/>
            <person name="Xu Z."/>
            <person name="Li S."/>
            <person name="Li X."/>
            <person name="Zheng H."/>
            <person name="Cong L."/>
            <person name="Lin L."/>
            <person name="Yin J."/>
            <person name="Geng J."/>
            <person name="Li G."/>
            <person name="Shi J."/>
            <person name="Liu J."/>
            <person name="Lv H."/>
            <person name="Li J."/>
            <person name="Wang J."/>
            <person name="Deng Y."/>
            <person name="Ran L."/>
            <person name="Shi X."/>
            <person name="Wang X."/>
            <person name="Wu Q."/>
            <person name="Li C."/>
            <person name="Ren X."/>
            <person name="Wang J."/>
            <person name="Wang X."/>
            <person name="Li D."/>
            <person name="Liu D."/>
            <person name="Zhang X."/>
            <person name="Ji Z."/>
            <person name="Zhao W."/>
            <person name="Sun Y."/>
            <person name="Zhang Z."/>
            <person name="Bao J."/>
            <person name="Han Y."/>
            <person name="Dong L."/>
            <person name="Ji J."/>
            <person name="Chen P."/>
            <person name="Wu S."/>
            <person name="Liu J."/>
            <person name="Xiao Y."/>
            <person name="Bu D."/>
            <person name="Tan J."/>
            <person name="Yang L."/>
            <person name="Ye C."/>
            <person name="Zhang J."/>
            <person name="Xu J."/>
            <person name="Zhou Y."/>
            <person name="Yu Y."/>
            <person name="Zhang B."/>
            <person name="Zhuang S."/>
            <person name="Wei H."/>
            <person name="Liu B."/>
            <person name="Lei M."/>
            <person name="Yu H."/>
            <person name="Li Y."/>
            <person name="Xu H."/>
            <person name="Wei S."/>
            <person name="He X."/>
            <person name="Fang L."/>
            <person name="Zhang Z."/>
            <person name="Zhang Y."/>
            <person name="Huang X."/>
            <person name="Su Z."/>
            <person name="Tong W."/>
            <person name="Li J."/>
            <person name="Tong Z."/>
            <person name="Li S."/>
            <person name="Ye J."/>
            <person name="Wang L."/>
            <person name="Fang L."/>
            <person name="Lei T."/>
            <person name="Chen C.-S."/>
            <person name="Chen H.-C."/>
            <person name="Xu Z."/>
            <person name="Li H."/>
            <person name="Huang H."/>
            <person name="Zhang F."/>
            <person name="Xu H."/>
            <person name="Li N."/>
            <person name="Zhao C."/>
            <person name="Li S."/>
            <person name="Dong L."/>
            <person name="Huang Y."/>
            <person name="Li L."/>
            <person name="Xi Y."/>
            <person name="Qi Q."/>
            <person name="Li W."/>
            <person name="Zhang B."/>
            <person name="Hu W."/>
            <person name="Zhang Y."/>
            <person name="Tian X."/>
            <person name="Jiao Y."/>
            <person name="Liang X."/>
            <person name="Jin J."/>
            <person name="Gao L."/>
            <person name="Zheng W."/>
            <person name="Hao B."/>
            <person name="Liu S.-M."/>
            <person name="Wang W."/>
            <person name="Yuan L."/>
            <person name="Cao M."/>
            <person name="McDermott J."/>
            <person name="Samudrala R."/>
            <person name="Wang J."/>
            <person name="Wong G.K.-S."/>
            <person name="Yang H."/>
        </authorList>
    </citation>
    <scope>NUCLEOTIDE SEQUENCE [LARGE SCALE GENOMIC DNA]</scope>
    <source>
        <strain>cv. Nipponbare</strain>
    </source>
</reference>
<reference key="5">
    <citation type="journal article" date="2003" name="Science">
        <title>Collection, mapping, and annotation of over 28,000 cDNA clones from japonica rice.</title>
        <authorList>
            <consortium name="The rice full-length cDNA consortium"/>
        </authorList>
    </citation>
    <scope>NUCLEOTIDE SEQUENCE [LARGE SCALE MRNA]</scope>
    <source>
        <strain>cv. Nipponbare</strain>
    </source>
</reference>
<protein>
    <recommendedName>
        <fullName>Putative 12-oxophytodienoate reductase 6</fullName>
        <ecNumber>1.3.1.-</ecNumber>
    </recommendedName>
    <alternativeName>
        <fullName>OPDA-reductase 6</fullName>
        <shortName>OsOPR6</shortName>
    </alternativeName>
</protein>
<proteinExistence type="evidence at transcript level"/>
<name>OPR6_ORYSJ</name>
<comment type="function">
    <text evidence="1">Putative oxophytodienoate reductase that may be involved in the biosynthesis or metabolism of oxylipin signaling molecules.</text>
</comment>
<comment type="cofactor">
    <cofactor>
        <name>FMN</name>
        <dbReference type="ChEBI" id="CHEBI:58210"/>
    </cofactor>
</comment>
<comment type="similarity">
    <text evidence="3">Belongs to the NADH:flavin oxidoreductase/NADH oxidase family.</text>
</comment>